<reference key="1">
    <citation type="submission" date="2008-04" db="EMBL/GenBank/DDBJ databases">
        <title>Complete sequence of Yersinia pseudotuberculosis PB1/+.</title>
        <authorList>
            <person name="Copeland A."/>
            <person name="Lucas S."/>
            <person name="Lapidus A."/>
            <person name="Glavina del Rio T."/>
            <person name="Dalin E."/>
            <person name="Tice H."/>
            <person name="Bruce D."/>
            <person name="Goodwin L."/>
            <person name="Pitluck S."/>
            <person name="Munk A.C."/>
            <person name="Brettin T."/>
            <person name="Detter J.C."/>
            <person name="Han C."/>
            <person name="Tapia R."/>
            <person name="Schmutz J."/>
            <person name="Larimer F."/>
            <person name="Land M."/>
            <person name="Hauser L."/>
            <person name="Challacombe J.F."/>
            <person name="Green L."/>
            <person name="Lindler L.E."/>
            <person name="Nikolich M.P."/>
            <person name="Richardson P."/>
        </authorList>
    </citation>
    <scope>NUCLEOTIDE SEQUENCE [LARGE SCALE GENOMIC DNA]</scope>
    <source>
        <strain>PB1/+</strain>
    </source>
</reference>
<organism>
    <name type="scientific">Yersinia pseudotuberculosis serotype IB (strain PB1/+)</name>
    <dbReference type="NCBI Taxonomy" id="502801"/>
    <lineage>
        <taxon>Bacteria</taxon>
        <taxon>Pseudomonadati</taxon>
        <taxon>Pseudomonadota</taxon>
        <taxon>Gammaproteobacteria</taxon>
        <taxon>Enterobacterales</taxon>
        <taxon>Yersiniaceae</taxon>
        <taxon>Yersinia</taxon>
    </lineage>
</organism>
<proteinExistence type="inferred from homology"/>
<name>RL16_YERPB</name>
<keyword id="KW-0687">Ribonucleoprotein</keyword>
<keyword id="KW-0689">Ribosomal protein</keyword>
<keyword id="KW-0694">RNA-binding</keyword>
<keyword id="KW-0699">rRNA-binding</keyword>
<keyword id="KW-0820">tRNA-binding</keyword>
<gene>
    <name evidence="1" type="primary">rplP</name>
    <name type="ordered locus">YPTS_3883</name>
</gene>
<accession>B2K5M3</accession>
<protein>
    <recommendedName>
        <fullName evidence="1">Large ribosomal subunit protein uL16</fullName>
    </recommendedName>
    <alternativeName>
        <fullName evidence="2">50S ribosomal protein L16</fullName>
    </alternativeName>
</protein>
<evidence type="ECO:0000255" key="1">
    <source>
        <dbReference type="HAMAP-Rule" id="MF_01342"/>
    </source>
</evidence>
<evidence type="ECO:0000305" key="2"/>
<feature type="chain" id="PRO_1000143055" description="Large ribosomal subunit protein uL16">
    <location>
        <begin position="1"/>
        <end position="136"/>
    </location>
</feature>
<comment type="function">
    <text evidence="1">Binds 23S rRNA and is also seen to make contacts with the A and possibly P site tRNAs.</text>
</comment>
<comment type="subunit">
    <text evidence="1">Part of the 50S ribosomal subunit.</text>
</comment>
<comment type="similarity">
    <text evidence="1">Belongs to the universal ribosomal protein uL16 family.</text>
</comment>
<dbReference type="EMBL" id="CP001048">
    <property type="protein sequence ID" value="ACC90832.1"/>
    <property type="molecule type" value="Genomic_DNA"/>
</dbReference>
<dbReference type="RefSeq" id="WP_002218940.1">
    <property type="nucleotide sequence ID" value="NZ_CP009780.1"/>
</dbReference>
<dbReference type="SMR" id="B2K5M3"/>
<dbReference type="GeneID" id="97454238"/>
<dbReference type="KEGG" id="ypb:YPTS_3883"/>
<dbReference type="PATRIC" id="fig|502801.10.peg.3348"/>
<dbReference type="GO" id="GO:0022625">
    <property type="term" value="C:cytosolic large ribosomal subunit"/>
    <property type="evidence" value="ECO:0007669"/>
    <property type="project" value="TreeGrafter"/>
</dbReference>
<dbReference type="GO" id="GO:0019843">
    <property type="term" value="F:rRNA binding"/>
    <property type="evidence" value="ECO:0007669"/>
    <property type="project" value="UniProtKB-UniRule"/>
</dbReference>
<dbReference type="GO" id="GO:0003735">
    <property type="term" value="F:structural constituent of ribosome"/>
    <property type="evidence" value="ECO:0007669"/>
    <property type="project" value="InterPro"/>
</dbReference>
<dbReference type="GO" id="GO:0000049">
    <property type="term" value="F:tRNA binding"/>
    <property type="evidence" value="ECO:0007669"/>
    <property type="project" value="UniProtKB-KW"/>
</dbReference>
<dbReference type="GO" id="GO:0006412">
    <property type="term" value="P:translation"/>
    <property type="evidence" value="ECO:0007669"/>
    <property type="project" value="UniProtKB-UniRule"/>
</dbReference>
<dbReference type="CDD" id="cd01433">
    <property type="entry name" value="Ribosomal_L16_L10e"/>
    <property type="match status" value="1"/>
</dbReference>
<dbReference type="FunFam" id="3.90.1170.10:FF:000001">
    <property type="entry name" value="50S ribosomal protein L16"/>
    <property type="match status" value="1"/>
</dbReference>
<dbReference type="Gene3D" id="3.90.1170.10">
    <property type="entry name" value="Ribosomal protein L10e/L16"/>
    <property type="match status" value="1"/>
</dbReference>
<dbReference type="HAMAP" id="MF_01342">
    <property type="entry name" value="Ribosomal_uL16"/>
    <property type="match status" value="1"/>
</dbReference>
<dbReference type="InterPro" id="IPR047873">
    <property type="entry name" value="Ribosomal_uL16"/>
</dbReference>
<dbReference type="InterPro" id="IPR000114">
    <property type="entry name" value="Ribosomal_uL16_bact-type"/>
</dbReference>
<dbReference type="InterPro" id="IPR020798">
    <property type="entry name" value="Ribosomal_uL16_CS"/>
</dbReference>
<dbReference type="InterPro" id="IPR016180">
    <property type="entry name" value="Ribosomal_uL16_dom"/>
</dbReference>
<dbReference type="InterPro" id="IPR036920">
    <property type="entry name" value="Ribosomal_uL16_sf"/>
</dbReference>
<dbReference type="NCBIfam" id="TIGR01164">
    <property type="entry name" value="rplP_bact"/>
    <property type="match status" value="1"/>
</dbReference>
<dbReference type="PANTHER" id="PTHR12220">
    <property type="entry name" value="50S/60S RIBOSOMAL PROTEIN L16"/>
    <property type="match status" value="1"/>
</dbReference>
<dbReference type="PANTHER" id="PTHR12220:SF13">
    <property type="entry name" value="LARGE RIBOSOMAL SUBUNIT PROTEIN UL16M"/>
    <property type="match status" value="1"/>
</dbReference>
<dbReference type="Pfam" id="PF00252">
    <property type="entry name" value="Ribosomal_L16"/>
    <property type="match status" value="1"/>
</dbReference>
<dbReference type="PRINTS" id="PR00060">
    <property type="entry name" value="RIBOSOMALL16"/>
</dbReference>
<dbReference type="SUPFAM" id="SSF54686">
    <property type="entry name" value="Ribosomal protein L16p/L10e"/>
    <property type="match status" value="1"/>
</dbReference>
<dbReference type="PROSITE" id="PS00586">
    <property type="entry name" value="RIBOSOMAL_L16_1"/>
    <property type="match status" value="1"/>
</dbReference>
<dbReference type="PROSITE" id="PS00701">
    <property type="entry name" value="RIBOSOMAL_L16_2"/>
    <property type="match status" value="1"/>
</dbReference>
<sequence>MLQPKRTKFRKMHKGRNRGLAQGTDVSFGEFGLKACGRCRLTARQIEAARRAMTRAIKRQGKVWIRVFPDKPITEKPLEVRMGKGKGNVEYWVALIQPGKVLFEMAGVPEETAREAFKLAAAKLPVGTTFVTKTVM</sequence>